<comment type="function">
    <text evidence="1">RuBisCO catalyzes two reactions: the carboxylation of D-ribulose 1,5-bisphosphate, the primary event in carbon dioxide fixation, as well as the oxidative fragmentation of the pentose substrate in the photorespiration process. Both reactions occur simultaneously and in competition at the same active site.</text>
</comment>
<comment type="catalytic activity">
    <reaction evidence="1">
        <text>2 (2R)-3-phosphoglycerate + 2 H(+) = D-ribulose 1,5-bisphosphate + CO2 + H2O</text>
        <dbReference type="Rhea" id="RHEA:23124"/>
        <dbReference type="ChEBI" id="CHEBI:15377"/>
        <dbReference type="ChEBI" id="CHEBI:15378"/>
        <dbReference type="ChEBI" id="CHEBI:16526"/>
        <dbReference type="ChEBI" id="CHEBI:57870"/>
        <dbReference type="ChEBI" id="CHEBI:58272"/>
        <dbReference type="EC" id="4.1.1.39"/>
    </reaction>
</comment>
<comment type="catalytic activity">
    <reaction evidence="1">
        <text>D-ribulose 1,5-bisphosphate + O2 = 2-phosphoglycolate + (2R)-3-phosphoglycerate + 2 H(+)</text>
        <dbReference type="Rhea" id="RHEA:36631"/>
        <dbReference type="ChEBI" id="CHEBI:15378"/>
        <dbReference type="ChEBI" id="CHEBI:15379"/>
        <dbReference type="ChEBI" id="CHEBI:57870"/>
        <dbReference type="ChEBI" id="CHEBI:58033"/>
        <dbReference type="ChEBI" id="CHEBI:58272"/>
    </reaction>
</comment>
<comment type="cofactor">
    <cofactor evidence="1">
        <name>Mg(2+)</name>
        <dbReference type="ChEBI" id="CHEBI:18420"/>
    </cofactor>
    <text evidence="1">Binds 1 Mg(2+) ion per subunit.</text>
</comment>
<comment type="subunit">
    <text evidence="1">Heterohexadecamer of 8 large chains and 8 small chains; disulfide-linked. The disulfide link is formed within the large subunit homodimers.</text>
</comment>
<comment type="subcellular location">
    <subcellularLocation>
        <location>Plastid</location>
        <location>Chloroplast</location>
    </subcellularLocation>
</comment>
<comment type="PTM">
    <text evidence="1">The disulfide bond which can form in the large chain dimeric partners within the hexadecamer appears to be associated with oxidative stress and protein turnover.</text>
</comment>
<comment type="miscellaneous">
    <text evidence="1">The basic functional RuBisCO is composed of a large chain homodimer in a 'head-to-tail' conformation. In form I RuBisCO this homodimer is arranged in a barrel-like tetramer with the small subunits forming a tetrameric 'cap' on each end of the 'barrel'.</text>
</comment>
<comment type="similarity">
    <text evidence="1">Belongs to the RuBisCO large chain family. Type I subfamily.</text>
</comment>
<name>RBL_PINKR</name>
<sequence>MSPKTETKASVGFKAGVKDYRLTYYTPEYQTKDTDILAAFRVTPQPGVPPEEAGAAVAAESSTGTWTTVWTDGLTSLDRYKGRCYDIEPVPGEESQFIAYVAYPLDLFEEGSVTNLFTSIVGNVFGFKALRALRLEDLRIPPSYSKTFQGPPHGIQVERDKLNKYGRPLLGCTIKPKLGLSAKNYGRAVYECLRGGLDFTKDDENVNSQPFMRWRDRFVFCAEAINKAQAETGEIKGHYLNATAGTCEEMIKRAVFARELGVPIVMHDYLTGGFTANTSLAHYCRDNGLLLHIHRAMHAVIDRQRNHGMHFRVLAKALRMSGGDHIHAGTVVGKLEGERDVTLGFVDLLRDDFIEKDRSRGIYFTQDWVSMPGVMPVASGGIHVWHMPALTEIFGDDSVLQFGGGTLGHPWGNAPGAVANRVALEACVQARNEGRDLAREGNEVIREAAKWSAELAAACEIWKEIKFEFDAIDRL</sequence>
<organism>
    <name type="scientific">Pinus krempfii</name>
    <name type="common">Krempf's pine</name>
    <dbReference type="NCBI Taxonomy" id="3342"/>
    <lineage>
        <taxon>Eukaryota</taxon>
        <taxon>Viridiplantae</taxon>
        <taxon>Streptophyta</taxon>
        <taxon>Embryophyta</taxon>
        <taxon>Tracheophyta</taxon>
        <taxon>Spermatophyta</taxon>
        <taxon>Pinopsida</taxon>
        <taxon>Pinidae</taxon>
        <taxon>Conifers I</taxon>
        <taxon>Pinales</taxon>
        <taxon>Pinaceae</taxon>
        <taxon>Pinus</taxon>
        <taxon>Pinus subgen. Strobus</taxon>
    </lineage>
</organism>
<dbReference type="EC" id="4.1.1.39" evidence="1"/>
<dbReference type="EMBL" id="X63665">
    <property type="protein sequence ID" value="CAA45205.1"/>
    <property type="molecule type" value="Genomic_DNA"/>
</dbReference>
<dbReference type="PIR" id="S19221">
    <property type="entry name" value="RKKHLK"/>
</dbReference>
<dbReference type="SMR" id="P26963"/>
<dbReference type="GO" id="GO:0009507">
    <property type="term" value="C:chloroplast"/>
    <property type="evidence" value="ECO:0007669"/>
    <property type="project" value="UniProtKB-SubCell"/>
</dbReference>
<dbReference type="GO" id="GO:0000287">
    <property type="term" value="F:magnesium ion binding"/>
    <property type="evidence" value="ECO:0007669"/>
    <property type="project" value="UniProtKB-UniRule"/>
</dbReference>
<dbReference type="GO" id="GO:0004497">
    <property type="term" value="F:monooxygenase activity"/>
    <property type="evidence" value="ECO:0007669"/>
    <property type="project" value="UniProtKB-KW"/>
</dbReference>
<dbReference type="GO" id="GO:0016984">
    <property type="term" value="F:ribulose-bisphosphate carboxylase activity"/>
    <property type="evidence" value="ECO:0007669"/>
    <property type="project" value="UniProtKB-UniRule"/>
</dbReference>
<dbReference type="GO" id="GO:0009853">
    <property type="term" value="P:photorespiration"/>
    <property type="evidence" value="ECO:0007669"/>
    <property type="project" value="UniProtKB-KW"/>
</dbReference>
<dbReference type="GO" id="GO:0019253">
    <property type="term" value="P:reductive pentose-phosphate cycle"/>
    <property type="evidence" value="ECO:0007669"/>
    <property type="project" value="UniProtKB-UniRule"/>
</dbReference>
<dbReference type="CDD" id="cd08212">
    <property type="entry name" value="RuBisCO_large_I"/>
    <property type="match status" value="1"/>
</dbReference>
<dbReference type="FunFam" id="3.20.20.110:FF:000001">
    <property type="entry name" value="Ribulose bisphosphate carboxylase large chain"/>
    <property type="match status" value="1"/>
</dbReference>
<dbReference type="FunFam" id="3.30.70.150:FF:000001">
    <property type="entry name" value="Ribulose bisphosphate carboxylase large chain"/>
    <property type="match status" value="1"/>
</dbReference>
<dbReference type="Gene3D" id="3.20.20.110">
    <property type="entry name" value="Ribulose bisphosphate carboxylase, large subunit, C-terminal domain"/>
    <property type="match status" value="1"/>
</dbReference>
<dbReference type="Gene3D" id="3.30.70.150">
    <property type="entry name" value="RuBisCO large subunit, N-terminal domain"/>
    <property type="match status" value="1"/>
</dbReference>
<dbReference type="HAMAP" id="MF_01338">
    <property type="entry name" value="RuBisCO_L_type1"/>
    <property type="match status" value="1"/>
</dbReference>
<dbReference type="InterPro" id="IPR033966">
    <property type="entry name" value="RuBisCO"/>
</dbReference>
<dbReference type="InterPro" id="IPR020878">
    <property type="entry name" value="RuBisCo_large_chain_AS"/>
</dbReference>
<dbReference type="InterPro" id="IPR000685">
    <property type="entry name" value="RuBisCO_lsu_C"/>
</dbReference>
<dbReference type="InterPro" id="IPR036376">
    <property type="entry name" value="RuBisCO_lsu_C_sf"/>
</dbReference>
<dbReference type="InterPro" id="IPR017443">
    <property type="entry name" value="RuBisCO_lsu_fd_N"/>
</dbReference>
<dbReference type="InterPro" id="IPR036422">
    <property type="entry name" value="RuBisCO_lsu_N_sf"/>
</dbReference>
<dbReference type="InterPro" id="IPR020888">
    <property type="entry name" value="RuBisCO_lsuI"/>
</dbReference>
<dbReference type="NCBIfam" id="NF003252">
    <property type="entry name" value="PRK04208.1"/>
    <property type="match status" value="1"/>
</dbReference>
<dbReference type="PANTHER" id="PTHR42704">
    <property type="entry name" value="RIBULOSE BISPHOSPHATE CARBOXYLASE"/>
    <property type="match status" value="1"/>
</dbReference>
<dbReference type="PANTHER" id="PTHR42704:SF15">
    <property type="entry name" value="RIBULOSE BISPHOSPHATE CARBOXYLASE LARGE CHAIN"/>
    <property type="match status" value="1"/>
</dbReference>
<dbReference type="Pfam" id="PF00016">
    <property type="entry name" value="RuBisCO_large"/>
    <property type="match status" value="1"/>
</dbReference>
<dbReference type="Pfam" id="PF02788">
    <property type="entry name" value="RuBisCO_large_N"/>
    <property type="match status" value="1"/>
</dbReference>
<dbReference type="SFLD" id="SFLDG01052">
    <property type="entry name" value="RuBisCO"/>
    <property type="match status" value="1"/>
</dbReference>
<dbReference type="SFLD" id="SFLDS00014">
    <property type="entry name" value="RuBisCO"/>
    <property type="match status" value="1"/>
</dbReference>
<dbReference type="SFLD" id="SFLDG00301">
    <property type="entry name" value="RuBisCO-like_proteins"/>
    <property type="match status" value="1"/>
</dbReference>
<dbReference type="SUPFAM" id="SSF51649">
    <property type="entry name" value="RuBisCo, C-terminal domain"/>
    <property type="match status" value="1"/>
</dbReference>
<dbReference type="SUPFAM" id="SSF54966">
    <property type="entry name" value="RuBisCO, large subunit, small (N-terminal) domain"/>
    <property type="match status" value="1"/>
</dbReference>
<dbReference type="PROSITE" id="PS00157">
    <property type="entry name" value="RUBISCO_LARGE"/>
    <property type="match status" value="1"/>
</dbReference>
<geneLocation type="chloroplast"/>
<protein>
    <recommendedName>
        <fullName evidence="1">Ribulose bisphosphate carboxylase large chain</fullName>
        <shortName evidence="1">RuBisCO large subunit</shortName>
        <ecNumber evidence="1">4.1.1.39</ecNumber>
    </recommendedName>
</protein>
<gene>
    <name evidence="1" type="primary">rbcL</name>
</gene>
<reference key="1">
    <citation type="submission" date="1992-01" db="EMBL/GenBank/DDBJ databases">
        <authorList>
            <person name="Doerksen A.H."/>
            <person name="Strauss S."/>
            <person name="Price R."/>
        </authorList>
    </citation>
    <scope>NUCLEOTIDE SEQUENCE [GENOMIC DNA]</scope>
</reference>
<proteinExistence type="inferred from homology"/>
<keyword id="KW-0007">Acetylation</keyword>
<keyword id="KW-0113">Calvin cycle</keyword>
<keyword id="KW-0120">Carbon dioxide fixation</keyword>
<keyword id="KW-0150">Chloroplast</keyword>
<keyword id="KW-1015">Disulfide bond</keyword>
<keyword id="KW-0456">Lyase</keyword>
<keyword id="KW-0460">Magnesium</keyword>
<keyword id="KW-0479">Metal-binding</keyword>
<keyword id="KW-0488">Methylation</keyword>
<keyword id="KW-0503">Monooxygenase</keyword>
<keyword id="KW-0560">Oxidoreductase</keyword>
<keyword id="KW-0601">Photorespiration</keyword>
<keyword id="KW-0602">Photosynthesis</keyword>
<keyword id="KW-0934">Plastid</keyword>
<accession>P26963</accession>
<evidence type="ECO:0000255" key="1">
    <source>
        <dbReference type="HAMAP-Rule" id="MF_01338"/>
    </source>
</evidence>
<feature type="propeptide" id="PRO_0000031361" evidence="1">
    <location>
        <begin position="1"/>
        <end position="2"/>
    </location>
</feature>
<feature type="chain" id="PRO_0000031362" description="Ribulose bisphosphate carboxylase large chain">
    <location>
        <begin position="3"/>
        <end position="475"/>
    </location>
</feature>
<feature type="active site" description="Proton acceptor" evidence="1">
    <location>
        <position position="175"/>
    </location>
</feature>
<feature type="active site" description="Proton acceptor" evidence="1">
    <location>
        <position position="294"/>
    </location>
</feature>
<feature type="binding site" description="in homodimeric partner" evidence="1">
    <location>
        <position position="123"/>
    </location>
    <ligand>
        <name>substrate</name>
    </ligand>
</feature>
<feature type="binding site" evidence="1">
    <location>
        <position position="173"/>
    </location>
    <ligand>
        <name>substrate</name>
    </ligand>
</feature>
<feature type="binding site" evidence="1">
    <location>
        <position position="177"/>
    </location>
    <ligand>
        <name>substrate</name>
    </ligand>
</feature>
<feature type="binding site" description="via carbamate group" evidence="1">
    <location>
        <position position="201"/>
    </location>
    <ligand>
        <name>Mg(2+)</name>
        <dbReference type="ChEBI" id="CHEBI:18420"/>
    </ligand>
</feature>
<feature type="binding site" evidence="1">
    <location>
        <position position="203"/>
    </location>
    <ligand>
        <name>Mg(2+)</name>
        <dbReference type="ChEBI" id="CHEBI:18420"/>
    </ligand>
</feature>
<feature type="binding site" evidence="1">
    <location>
        <position position="204"/>
    </location>
    <ligand>
        <name>Mg(2+)</name>
        <dbReference type="ChEBI" id="CHEBI:18420"/>
    </ligand>
</feature>
<feature type="binding site" evidence="1">
    <location>
        <position position="295"/>
    </location>
    <ligand>
        <name>substrate</name>
    </ligand>
</feature>
<feature type="binding site" evidence="1">
    <location>
        <position position="327"/>
    </location>
    <ligand>
        <name>substrate</name>
    </ligand>
</feature>
<feature type="binding site" evidence="1">
    <location>
        <position position="379"/>
    </location>
    <ligand>
        <name>substrate</name>
    </ligand>
</feature>
<feature type="site" description="Transition state stabilizer" evidence="1">
    <location>
        <position position="334"/>
    </location>
</feature>
<feature type="modified residue" description="N-acetylproline" evidence="1">
    <location>
        <position position="3"/>
    </location>
</feature>
<feature type="modified residue" description="N6,N6,N6-trimethyllysine" evidence="1">
    <location>
        <position position="14"/>
    </location>
</feature>
<feature type="modified residue" description="N6-carboxylysine" evidence="1">
    <location>
        <position position="201"/>
    </location>
</feature>
<feature type="disulfide bond" description="Interchain; in linked form" evidence="1">
    <location>
        <position position="247"/>
    </location>
</feature>